<dbReference type="EC" id="1.14.99.-" evidence="6"/>
<dbReference type="EMBL" id="AAHF01000005">
    <property type="protein sequence ID" value="EAL89493.1"/>
    <property type="molecule type" value="Genomic_DNA"/>
</dbReference>
<dbReference type="RefSeq" id="XP_751531.1">
    <property type="nucleotide sequence ID" value="XM_746438.1"/>
</dbReference>
<dbReference type="SMR" id="Q4WQJ1"/>
<dbReference type="STRING" id="330879.Q4WQJ1"/>
<dbReference type="EnsemblFungi" id="EAL89493">
    <property type="protein sequence ID" value="EAL89493"/>
    <property type="gene ID" value="AFUA_4G13000"/>
</dbReference>
<dbReference type="GeneID" id="3509186"/>
<dbReference type="KEGG" id="afm:AFUA_4G13000"/>
<dbReference type="VEuPathDB" id="FungiDB:Afu4g13000"/>
<dbReference type="eggNOG" id="KOG0029">
    <property type="taxonomic scope" value="Eukaryota"/>
</dbReference>
<dbReference type="HOGENOM" id="CLU_004498_1_2_1"/>
<dbReference type="InParanoid" id="Q4WQJ1"/>
<dbReference type="OMA" id="WCAENPF"/>
<dbReference type="OrthoDB" id="9982100at2759"/>
<dbReference type="Proteomes" id="UP000002530">
    <property type="component" value="Chromosome 4"/>
</dbReference>
<dbReference type="GO" id="GO:0005634">
    <property type="term" value="C:nucleus"/>
    <property type="evidence" value="ECO:0007669"/>
    <property type="project" value="UniProtKB-SubCell"/>
</dbReference>
<dbReference type="GO" id="GO:0003682">
    <property type="term" value="F:chromatin binding"/>
    <property type="evidence" value="ECO:0000318"/>
    <property type="project" value="GO_Central"/>
</dbReference>
<dbReference type="GO" id="GO:0003677">
    <property type="term" value="F:DNA binding"/>
    <property type="evidence" value="ECO:0007669"/>
    <property type="project" value="UniProtKB-KW"/>
</dbReference>
<dbReference type="GO" id="GO:0140682">
    <property type="term" value="F:FAD-dependent H3K4me/H3K4me3 demethylase activity"/>
    <property type="evidence" value="ECO:0000318"/>
    <property type="project" value="GO_Central"/>
</dbReference>
<dbReference type="GO" id="GO:0050660">
    <property type="term" value="F:flavin adenine dinucleotide binding"/>
    <property type="evidence" value="ECO:0000318"/>
    <property type="project" value="GO_Central"/>
</dbReference>
<dbReference type="GO" id="GO:0040029">
    <property type="term" value="P:epigenetic regulation of gene expression"/>
    <property type="evidence" value="ECO:0000318"/>
    <property type="project" value="GO_Central"/>
</dbReference>
<dbReference type="FunFam" id="1.10.10.10:FF:000064">
    <property type="entry name" value="Lysine-specific histone demethylase 1A"/>
    <property type="match status" value="1"/>
</dbReference>
<dbReference type="FunFam" id="3.50.50.60:FF:000177">
    <property type="entry name" value="Lysine-specific histone demethylase Aof2"/>
    <property type="match status" value="1"/>
</dbReference>
<dbReference type="FunFam" id="3.50.50.60:FF:000249">
    <property type="entry name" value="Lysine-specific histone demethylase Aof2"/>
    <property type="match status" value="1"/>
</dbReference>
<dbReference type="FunFam" id="1.10.30.10:FF:000067">
    <property type="entry name" value="Lysine-specific histone demethylase Aof2, putative"/>
    <property type="match status" value="1"/>
</dbReference>
<dbReference type="Gene3D" id="3.90.660.10">
    <property type="match status" value="1"/>
</dbReference>
<dbReference type="Gene3D" id="3.50.50.60">
    <property type="entry name" value="FAD/NAD(P)-binding domain"/>
    <property type="match status" value="2"/>
</dbReference>
<dbReference type="Gene3D" id="1.10.30.10">
    <property type="entry name" value="High mobility group box domain"/>
    <property type="match status" value="1"/>
</dbReference>
<dbReference type="Gene3D" id="1.10.10.10">
    <property type="entry name" value="Winged helix-like DNA-binding domain superfamily/Winged helix DNA-binding domain"/>
    <property type="match status" value="1"/>
</dbReference>
<dbReference type="InterPro" id="IPR002937">
    <property type="entry name" value="Amino_oxidase"/>
</dbReference>
<dbReference type="InterPro" id="IPR036188">
    <property type="entry name" value="FAD/NAD-bd_sf"/>
</dbReference>
<dbReference type="InterPro" id="IPR050281">
    <property type="entry name" value="Flavin_monoamine_oxidase"/>
</dbReference>
<dbReference type="InterPro" id="IPR009071">
    <property type="entry name" value="HMG_box_dom"/>
</dbReference>
<dbReference type="InterPro" id="IPR036910">
    <property type="entry name" value="HMG_box_dom_sf"/>
</dbReference>
<dbReference type="InterPro" id="IPR009057">
    <property type="entry name" value="Homeodomain-like_sf"/>
</dbReference>
<dbReference type="InterPro" id="IPR007526">
    <property type="entry name" value="SWIRM"/>
</dbReference>
<dbReference type="InterPro" id="IPR036388">
    <property type="entry name" value="WH-like_DNA-bd_sf"/>
</dbReference>
<dbReference type="PANTHER" id="PTHR10742">
    <property type="entry name" value="FLAVIN MONOAMINE OXIDASE"/>
    <property type="match status" value="1"/>
</dbReference>
<dbReference type="PANTHER" id="PTHR10742:SF386">
    <property type="entry name" value="LYSINE-SPECIFIC HISTONE DEMETHYLASE 1A"/>
    <property type="match status" value="1"/>
</dbReference>
<dbReference type="Pfam" id="PF01593">
    <property type="entry name" value="Amino_oxidase"/>
    <property type="match status" value="1"/>
</dbReference>
<dbReference type="Pfam" id="PF13450">
    <property type="entry name" value="NAD_binding_8"/>
    <property type="match status" value="1"/>
</dbReference>
<dbReference type="Pfam" id="PF04433">
    <property type="entry name" value="SWIRM"/>
    <property type="match status" value="1"/>
</dbReference>
<dbReference type="SUPFAM" id="SSF54373">
    <property type="entry name" value="FAD-linked reductases, C-terminal domain"/>
    <property type="match status" value="1"/>
</dbReference>
<dbReference type="SUPFAM" id="SSF51905">
    <property type="entry name" value="FAD/NAD(P)-binding domain"/>
    <property type="match status" value="1"/>
</dbReference>
<dbReference type="SUPFAM" id="SSF47095">
    <property type="entry name" value="HMG-box"/>
    <property type="match status" value="1"/>
</dbReference>
<dbReference type="SUPFAM" id="SSF46689">
    <property type="entry name" value="Homeodomain-like"/>
    <property type="match status" value="1"/>
</dbReference>
<dbReference type="PROSITE" id="PS50118">
    <property type="entry name" value="HMG_BOX_2"/>
    <property type="match status" value="1"/>
</dbReference>
<dbReference type="PROSITE" id="PS50934">
    <property type="entry name" value="SWIRM"/>
    <property type="match status" value="1"/>
</dbReference>
<proteinExistence type="inferred from homology"/>
<comment type="function">
    <text evidence="4">H3K4 demethylase-like protein (PubMed:23638376). Might not act as a H3K4 demethylase or is not the major H3K4 demethylase since its deletion does not affect whole genome H3K4 methylation (PubMed:23638376).</text>
</comment>
<comment type="subcellular location">
    <subcellularLocation>
        <location evidence="2">Nucleus</location>
    </subcellularLocation>
</comment>
<comment type="disruption phenotype">
    <text evidence="4">Does not affect whole genome H3K4 methylation.</text>
</comment>
<comment type="similarity">
    <text evidence="6">Belongs to the flavin monoamine oxidase family.</text>
</comment>
<accession>Q4WQJ1</accession>
<name>HDMA_ASPFU</name>
<feature type="chain" id="PRO_0000458883" description="Histone demethylase-like protein A">
    <location>
        <begin position="1"/>
        <end position="1081"/>
    </location>
</feature>
<feature type="domain" description="SWIRM" evidence="1">
    <location>
        <begin position="192"/>
        <end position="287"/>
    </location>
</feature>
<feature type="DNA-binding region" description="HMG box" evidence="2">
    <location>
        <begin position="969"/>
        <end position="1049"/>
    </location>
</feature>
<feature type="region of interest" description="Disordered" evidence="3">
    <location>
        <begin position="37"/>
        <end position="173"/>
    </location>
</feature>
<feature type="region of interest" description="Disordered" evidence="3">
    <location>
        <begin position="902"/>
        <end position="940"/>
    </location>
</feature>
<feature type="compositionally biased region" description="Low complexity" evidence="3">
    <location>
        <begin position="66"/>
        <end position="81"/>
    </location>
</feature>
<feature type="compositionally biased region" description="Polar residues" evidence="3">
    <location>
        <begin position="119"/>
        <end position="132"/>
    </location>
</feature>
<feature type="compositionally biased region" description="Low complexity" evidence="3">
    <location>
        <begin position="141"/>
        <end position="161"/>
    </location>
</feature>
<feature type="compositionally biased region" description="Polar residues" evidence="3">
    <location>
        <begin position="914"/>
        <end position="925"/>
    </location>
</feature>
<gene>
    <name evidence="5" type="primary">hdmA</name>
    <name type="ORF">AFUA_4G13000</name>
</gene>
<protein>
    <recommendedName>
        <fullName evidence="5">Histone demethylase-like protein A</fullName>
        <ecNumber evidence="6">1.14.99.-</ecNumber>
    </recommendedName>
</protein>
<evidence type="ECO:0000255" key="1">
    <source>
        <dbReference type="PROSITE-ProRule" id="PRU00247"/>
    </source>
</evidence>
<evidence type="ECO:0000255" key="2">
    <source>
        <dbReference type="PROSITE-ProRule" id="PRU00267"/>
    </source>
</evidence>
<evidence type="ECO:0000256" key="3">
    <source>
        <dbReference type="SAM" id="MobiDB-lite"/>
    </source>
</evidence>
<evidence type="ECO:0000269" key="4">
    <source>
    </source>
</evidence>
<evidence type="ECO:0000303" key="5">
    <source>
    </source>
</evidence>
<evidence type="ECO:0000305" key="6"/>
<organism>
    <name type="scientific">Aspergillus fumigatus (strain ATCC MYA-4609 / CBS 101355 / FGSC A1100 / Af293)</name>
    <name type="common">Neosartorya fumigata</name>
    <dbReference type="NCBI Taxonomy" id="330879"/>
    <lineage>
        <taxon>Eukaryota</taxon>
        <taxon>Fungi</taxon>
        <taxon>Dikarya</taxon>
        <taxon>Ascomycota</taxon>
        <taxon>Pezizomycotina</taxon>
        <taxon>Eurotiomycetes</taxon>
        <taxon>Eurotiomycetidae</taxon>
        <taxon>Eurotiales</taxon>
        <taxon>Aspergillaceae</taxon>
        <taxon>Aspergillus</taxon>
        <taxon>Aspergillus subgen. Fumigati</taxon>
    </lineage>
</organism>
<reference key="1">
    <citation type="journal article" date="2005" name="Nature">
        <title>Genomic sequence of the pathogenic and allergenic filamentous fungus Aspergillus fumigatus.</title>
        <authorList>
            <person name="Nierman W.C."/>
            <person name="Pain A."/>
            <person name="Anderson M.J."/>
            <person name="Wortman J.R."/>
            <person name="Kim H.S."/>
            <person name="Arroyo J."/>
            <person name="Berriman M."/>
            <person name="Abe K."/>
            <person name="Archer D.B."/>
            <person name="Bermejo C."/>
            <person name="Bennett J.W."/>
            <person name="Bowyer P."/>
            <person name="Chen D."/>
            <person name="Collins M."/>
            <person name="Coulsen R."/>
            <person name="Davies R."/>
            <person name="Dyer P.S."/>
            <person name="Farman M.L."/>
            <person name="Fedorova N."/>
            <person name="Fedorova N.D."/>
            <person name="Feldblyum T.V."/>
            <person name="Fischer R."/>
            <person name="Fosker N."/>
            <person name="Fraser A."/>
            <person name="Garcia J.L."/>
            <person name="Garcia M.J."/>
            <person name="Goble A."/>
            <person name="Goldman G.H."/>
            <person name="Gomi K."/>
            <person name="Griffith-Jones S."/>
            <person name="Gwilliam R."/>
            <person name="Haas B.J."/>
            <person name="Haas H."/>
            <person name="Harris D.E."/>
            <person name="Horiuchi H."/>
            <person name="Huang J."/>
            <person name="Humphray S."/>
            <person name="Jimenez J."/>
            <person name="Keller N."/>
            <person name="Khouri H."/>
            <person name="Kitamoto K."/>
            <person name="Kobayashi T."/>
            <person name="Konzack S."/>
            <person name="Kulkarni R."/>
            <person name="Kumagai T."/>
            <person name="Lafton A."/>
            <person name="Latge J.-P."/>
            <person name="Li W."/>
            <person name="Lord A."/>
            <person name="Lu C."/>
            <person name="Majoros W.H."/>
            <person name="May G.S."/>
            <person name="Miller B.L."/>
            <person name="Mohamoud Y."/>
            <person name="Molina M."/>
            <person name="Monod M."/>
            <person name="Mouyna I."/>
            <person name="Mulligan S."/>
            <person name="Murphy L.D."/>
            <person name="O'Neil S."/>
            <person name="Paulsen I."/>
            <person name="Penalva M.A."/>
            <person name="Pertea M."/>
            <person name="Price C."/>
            <person name="Pritchard B.L."/>
            <person name="Quail M.A."/>
            <person name="Rabbinowitsch E."/>
            <person name="Rawlins N."/>
            <person name="Rajandream M.A."/>
            <person name="Reichard U."/>
            <person name="Renauld H."/>
            <person name="Robson G.D."/>
            <person name="Rodriguez de Cordoba S."/>
            <person name="Rodriguez-Pena J.M."/>
            <person name="Ronning C.M."/>
            <person name="Rutter S."/>
            <person name="Salzberg S.L."/>
            <person name="Sanchez M."/>
            <person name="Sanchez-Ferrero J.C."/>
            <person name="Saunders D."/>
            <person name="Seeger K."/>
            <person name="Squares R."/>
            <person name="Squares S."/>
            <person name="Takeuchi M."/>
            <person name="Tekaia F."/>
            <person name="Turner G."/>
            <person name="Vazquez de Aldana C.R."/>
            <person name="Weidman J."/>
            <person name="White O."/>
            <person name="Woodward J.R."/>
            <person name="Yu J.-H."/>
            <person name="Fraser C.M."/>
            <person name="Galagan J.E."/>
            <person name="Asai K."/>
            <person name="Machida M."/>
            <person name="Hall N."/>
            <person name="Barrell B.G."/>
            <person name="Denning D.W."/>
        </authorList>
    </citation>
    <scope>NUCLEOTIDE SEQUENCE [LARGE SCALE GENOMIC DNA]</scope>
    <source>
        <strain>ATCC MYA-4609 / CBS 101355 / FGSC A1100 / Af293</strain>
    </source>
</reference>
<reference key="2">
    <citation type="journal article" date="2013" name="PeerJ">
        <title>Loss of CclA, required for histone 3 lysine 4 methylation, decreases growth but increases secondary metabolite production in Aspergillus fumigatus.</title>
        <authorList>
            <person name="Palmer J.M."/>
            <person name="Bok J.W."/>
            <person name="Lee S."/>
            <person name="Dagenais T.R.T."/>
            <person name="Andes D.R."/>
            <person name="Kontoyiannis D.P."/>
            <person name="Keller N.P."/>
        </authorList>
    </citation>
    <scope>FUNCTION</scope>
    <scope>DISRUPTION PHENOTYPE</scope>
</reference>
<keyword id="KW-0238">DNA-binding</keyword>
<keyword id="KW-0539">Nucleus</keyword>
<keyword id="KW-0560">Oxidoreductase</keyword>
<keyword id="KW-1185">Reference proteome</keyword>
<sequence>MEATASMGLQGLNGVSYDLSQLDNYLSHATTYVNGNQHLQHPSLPNERISGTVDLSEPPAKRLRRSPSCNESNESNGETSSPAAIIDPSTRLQDVNGGLDRVAGGSESADSMTHDSNEDTSNILSGSATSVSLMYEPSQKNSTPPSTVNNVPSSSSITSDSKGLSGNTDYARYRPRSSIPSKLTAAVYAQQCVTAAYACRLNPYSLHKKEQEALQDHLCHLHVTAYLNIRNGILRLWTRNPMVSVTKDEALGCAKDYRWMGLASFAYEWLVRNGYINFGCVEIPPALVAPKKGRRKDGPVIVVIGAGMAGLGCARQLEGLFKQYHDPLTSPRVVVLEGRRRIGGRIYSHPLRSLQSSKLAPGVVPKAEMGAQIIVGFEHGNPLDQIIRGQLALPYHLLRDISTIYDIDGSAVDEVQDAMDERLYIDVLDRSGLYRHNAVIVPTAEGDRRLIDSGRDLTMSDGLTVRQYEEARAAGTVELLFPNKKVRRGVGHKTADIKATIPPVPTDLGPAEEQPAALACQAMGWKLKDGVPPTASLNLDPVAKASMWPTLGAVMDEGVKQYQRMLPLTPKDMRLINWHFANLEYANATNIGKLSLSGWDQDLGNEFEGEHSQVIGGYQQVPYGLWSLPTKLDVRTNKIVSKIAYDSTGSGKRKTVVHCEDGESFVADKVVFTASLGVLKHHSIEFSPPLPDWKRGAIERLGFGVMNKVILVFEEPFWDTERDMFGLLREPKNRDSMVQEDYAANRGRFYLFWNCMKTTGLPVLIALMAGDAAHQAEYTPDGEIIAEVTSQLRNIFKHVAVPDPLETIITRWASDRFTRGSYSYVAAQALPGDYDLMAKPVGNLHFAGEATCGTHPATVHGAYLSGLRAASEIIESVLGPIEIPNPLVPEKGKAIELGTSVATAQKKKEPPCSNGFSAPVSTSAHPTDASAPARSNNSFSGDTALRQAYEQAMWAAIHAELGPPEPRPARTGLNPFLLYQKDYWGKARAQCDETKQATTKDPNAKAARDEIRQALGLMWRQASEEEKRPYIEQTEVNRQTNTEIWDRWKQNTKEWERKSLEIKKRWCAANPFETWQPPAKR</sequence>